<gene>
    <name type="primary">tif1</name>
    <name type="synonym">tif41</name>
    <name type="ORF">AFUA_3G08160</name>
</gene>
<dbReference type="EC" id="3.6.4.13"/>
<dbReference type="EMBL" id="AAHF01000002">
    <property type="protein sequence ID" value="EAL92760.1"/>
    <property type="molecule type" value="Genomic_DNA"/>
</dbReference>
<dbReference type="RefSeq" id="XP_754798.1">
    <property type="nucleotide sequence ID" value="XM_749705.1"/>
</dbReference>
<dbReference type="SMR" id="Q4WX43"/>
<dbReference type="FunCoup" id="Q4WX43">
    <property type="interactions" value="1245"/>
</dbReference>
<dbReference type="STRING" id="330879.Q4WX43"/>
<dbReference type="SwissPalm" id="Q4WX43"/>
<dbReference type="EnsemblFungi" id="EAL92760">
    <property type="protein sequence ID" value="EAL92760"/>
    <property type="gene ID" value="AFUA_3G08160"/>
</dbReference>
<dbReference type="GeneID" id="3512293"/>
<dbReference type="KEGG" id="afm:AFUA_3G08160"/>
<dbReference type="VEuPathDB" id="FungiDB:Afu3g08160"/>
<dbReference type="eggNOG" id="KOG0327">
    <property type="taxonomic scope" value="Eukaryota"/>
</dbReference>
<dbReference type="HOGENOM" id="CLU_003041_1_0_1"/>
<dbReference type="InParanoid" id="Q4WX43"/>
<dbReference type="OMA" id="FGCQALV"/>
<dbReference type="OrthoDB" id="10265785at2759"/>
<dbReference type="Proteomes" id="UP000002530">
    <property type="component" value="Chromosome 3"/>
</dbReference>
<dbReference type="GO" id="GO:0010494">
    <property type="term" value="C:cytoplasmic stress granule"/>
    <property type="evidence" value="ECO:0000318"/>
    <property type="project" value="GO_Central"/>
</dbReference>
<dbReference type="GO" id="GO:0005524">
    <property type="term" value="F:ATP binding"/>
    <property type="evidence" value="ECO:0007669"/>
    <property type="project" value="UniProtKB-KW"/>
</dbReference>
<dbReference type="GO" id="GO:0016887">
    <property type="term" value="F:ATP hydrolysis activity"/>
    <property type="evidence" value="ECO:0007669"/>
    <property type="project" value="RHEA"/>
</dbReference>
<dbReference type="GO" id="GO:0003723">
    <property type="term" value="F:RNA binding"/>
    <property type="evidence" value="ECO:0007669"/>
    <property type="project" value="UniProtKB-KW"/>
</dbReference>
<dbReference type="GO" id="GO:0003724">
    <property type="term" value="F:RNA helicase activity"/>
    <property type="evidence" value="ECO:0007669"/>
    <property type="project" value="UniProtKB-EC"/>
</dbReference>
<dbReference type="GO" id="GO:0003743">
    <property type="term" value="F:translation initiation factor activity"/>
    <property type="evidence" value="ECO:0000318"/>
    <property type="project" value="GO_Central"/>
</dbReference>
<dbReference type="GO" id="GO:0002183">
    <property type="term" value="P:cytoplasmic translational initiation"/>
    <property type="evidence" value="ECO:0000318"/>
    <property type="project" value="GO_Central"/>
</dbReference>
<dbReference type="CDD" id="cd18046">
    <property type="entry name" value="DEADc_EIF4AII_EIF4AI_DDX2"/>
    <property type="match status" value="1"/>
</dbReference>
<dbReference type="CDD" id="cd18787">
    <property type="entry name" value="SF2_C_DEAD"/>
    <property type="match status" value="1"/>
</dbReference>
<dbReference type="FunFam" id="3.40.50.300:FF:000089">
    <property type="entry name" value="Eukaryotic initiation factor 4A-II"/>
    <property type="match status" value="1"/>
</dbReference>
<dbReference type="FunFam" id="3.40.50.300:FF:000031">
    <property type="entry name" value="Eukaryotic initiation factor 4A-III"/>
    <property type="match status" value="1"/>
</dbReference>
<dbReference type="Gene3D" id="3.40.50.300">
    <property type="entry name" value="P-loop containing nucleotide triphosphate hydrolases"/>
    <property type="match status" value="2"/>
</dbReference>
<dbReference type="InterPro" id="IPR011545">
    <property type="entry name" value="DEAD/DEAH_box_helicase_dom"/>
</dbReference>
<dbReference type="InterPro" id="IPR044728">
    <property type="entry name" value="EIF4A_DEADc"/>
</dbReference>
<dbReference type="InterPro" id="IPR014001">
    <property type="entry name" value="Helicase_ATP-bd"/>
</dbReference>
<dbReference type="InterPro" id="IPR001650">
    <property type="entry name" value="Helicase_C-like"/>
</dbReference>
<dbReference type="InterPro" id="IPR027417">
    <property type="entry name" value="P-loop_NTPase"/>
</dbReference>
<dbReference type="InterPro" id="IPR000629">
    <property type="entry name" value="RNA-helicase_DEAD-box_CS"/>
</dbReference>
<dbReference type="InterPro" id="IPR014014">
    <property type="entry name" value="RNA_helicase_DEAD_Q_motif"/>
</dbReference>
<dbReference type="PANTHER" id="PTHR47958">
    <property type="entry name" value="ATP-DEPENDENT RNA HELICASE DBP3"/>
    <property type="match status" value="1"/>
</dbReference>
<dbReference type="Pfam" id="PF00270">
    <property type="entry name" value="DEAD"/>
    <property type="match status" value="1"/>
</dbReference>
<dbReference type="Pfam" id="PF00271">
    <property type="entry name" value="Helicase_C"/>
    <property type="match status" value="1"/>
</dbReference>
<dbReference type="SMART" id="SM00487">
    <property type="entry name" value="DEXDc"/>
    <property type="match status" value="1"/>
</dbReference>
<dbReference type="SMART" id="SM00490">
    <property type="entry name" value="HELICc"/>
    <property type="match status" value="1"/>
</dbReference>
<dbReference type="SUPFAM" id="SSF52540">
    <property type="entry name" value="P-loop containing nucleoside triphosphate hydrolases"/>
    <property type="match status" value="1"/>
</dbReference>
<dbReference type="PROSITE" id="PS00039">
    <property type="entry name" value="DEAD_ATP_HELICASE"/>
    <property type="match status" value="1"/>
</dbReference>
<dbReference type="PROSITE" id="PS51192">
    <property type="entry name" value="HELICASE_ATP_BIND_1"/>
    <property type="match status" value="1"/>
</dbReference>
<dbReference type="PROSITE" id="PS51194">
    <property type="entry name" value="HELICASE_CTER"/>
    <property type="match status" value="1"/>
</dbReference>
<dbReference type="PROSITE" id="PS51195">
    <property type="entry name" value="Q_MOTIF"/>
    <property type="match status" value="1"/>
</dbReference>
<name>IF4A_ASPFU</name>
<keyword id="KW-0067">ATP-binding</keyword>
<keyword id="KW-0963">Cytoplasm</keyword>
<keyword id="KW-0347">Helicase</keyword>
<keyword id="KW-0378">Hydrolase</keyword>
<keyword id="KW-0396">Initiation factor</keyword>
<keyword id="KW-0547">Nucleotide-binding</keyword>
<keyword id="KW-0648">Protein biosynthesis</keyword>
<keyword id="KW-1185">Reference proteome</keyword>
<keyword id="KW-0694">RNA-binding</keyword>
<protein>
    <recommendedName>
        <fullName>ATP-dependent RNA helicase eIF4A</fullName>
        <ecNumber>3.6.4.13</ecNumber>
    </recommendedName>
    <alternativeName>
        <fullName>Eukaryotic initiation factor 4A</fullName>
        <shortName>eIF-4A</shortName>
    </alternativeName>
    <alternativeName>
        <fullName>Translation initiation factor 1</fullName>
    </alternativeName>
</protein>
<evidence type="ECO:0000250" key="1"/>
<evidence type="ECO:0000255" key="2">
    <source>
        <dbReference type="PROSITE-ProRule" id="PRU00541"/>
    </source>
</evidence>
<evidence type="ECO:0000255" key="3">
    <source>
        <dbReference type="PROSITE-ProRule" id="PRU00542"/>
    </source>
</evidence>
<evidence type="ECO:0000305" key="4"/>
<comment type="function">
    <text evidence="1">ATP-dependent RNA helicase which is a subunit of the eIF4F complex involved in cap recognition and is required for mRNA binding to ribosome. In the current model of translation initiation, eIF4A unwinds RNA secondary structures in the 5'-UTR of mRNAs which is necessary to allow efficient binding of the small ribosomal subunit, and subsequent scanning for the initiator codon (By similarity).</text>
</comment>
<comment type="catalytic activity">
    <reaction>
        <text>ATP + H2O = ADP + phosphate + H(+)</text>
        <dbReference type="Rhea" id="RHEA:13065"/>
        <dbReference type="ChEBI" id="CHEBI:15377"/>
        <dbReference type="ChEBI" id="CHEBI:15378"/>
        <dbReference type="ChEBI" id="CHEBI:30616"/>
        <dbReference type="ChEBI" id="CHEBI:43474"/>
        <dbReference type="ChEBI" id="CHEBI:456216"/>
        <dbReference type="EC" id="3.6.4.13"/>
    </reaction>
</comment>
<comment type="subunit">
    <text evidence="1">Component of the eIF4F complex, which composition varies with external and internal environmental conditions. It is composed of at least eIF4A, eIF4E and eIF4G (By similarity).</text>
</comment>
<comment type="subcellular location">
    <subcellularLocation>
        <location evidence="1">Cytoplasm</location>
    </subcellularLocation>
</comment>
<comment type="domain">
    <text>The Q motif is unique to and characteristic of the DEAD box family of RNA helicases and controls ATP binding and hydrolysis.</text>
</comment>
<comment type="similarity">
    <text evidence="4">Belongs to the DEAD box helicase family. eIF4A subfamily.</text>
</comment>
<accession>Q4WX43</accession>
<feature type="chain" id="PRO_0000232131" description="ATP-dependent RNA helicase eIF4A">
    <location>
        <begin position="1"/>
        <end position="406"/>
    </location>
</feature>
<feature type="domain" description="Helicase ATP-binding" evidence="2">
    <location>
        <begin position="56"/>
        <end position="226"/>
    </location>
</feature>
<feature type="domain" description="Helicase C-terminal" evidence="3">
    <location>
        <begin position="237"/>
        <end position="398"/>
    </location>
</feature>
<feature type="short sequence motif" description="Q motif">
    <location>
        <begin position="25"/>
        <end position="53"/>
    </location>
</feature>
<feature type="short sequence motif" description="DEAD box">
    <location>
        <begin position="174"/>
        <end position="177"/>
    </location>
</feature>
<feature type="binding site" evidence="2">
    <location>
        <begin position="69"/>
        <end position="76"/>
    </location>
    <ligand>
        <name>ATP</name>
        <dbReference type="ChEBI" id="CHEBI:30616"/>
    </ligand>
</feature>
<reference key="1">
    <citation type="journal article" date="2005" name="Nature">
        <title>Genomic sequence of the pathogenic and allergenic filamentous fungus Aspergillus fumigatus.</title>
        <authorList>
            <person name="Nierman W.C."/>
            <person name="Pain A."/>
            <person name="Anderson M.J."/>
            <person name="Wortman J.R."/>
            <person name="Kim H.S."/>
            <person name="Arroyo J."/>
            <person name="Berriman M."/>
            <person name="Abe K."/>
            <person name="Archer D.B."/>
            <person name="Bermejo C."/>
            <person name="Bennett J.W."/>
            <person name="Bowyer P."/>
            <person name="Chen D."/>
            <person name="Collins M."/>
            <person name="Coulsen R."/>
            <person name="Davies R."/>
            <person name="Dyer P.S."/>
            <person name="Farman M.L."/>
            <person name="Fedorova N."/>
            <person name="Fedorova N.D."/>
            <person name="Feldblyum T.V."/>
            <person name="Fischer R."/>
            <person name="Fosker N."/>
            <person name="Fraser A."/>
            <person name="Garcia J.L."/>
            <person name="Garcia M.J."/>
            <person name="Goble A."/>
            <person name="Goldman G.H."/>
            <person name="Gomi K."/>
            <person name="Griffith-Jones S."/>
            <person name="Gwilliam R."/>
            <person name="Haas B.J."/>
            <person name="Haas H."/>
            <person name="Harris D.E."/>
            <person name="Horiuchi H."/>
            <person name="Huang J."/>
            <person name="Humphray S."/>
            <person name="Jimenez J."/>
            <person name="Keller N."/>
            <person name="Khouri H."/>
            <person name="Kitamoto K."/>
            <person name="Kobayashi T."/>
            <person name="Konzack S."/>
            <person name="Kulkarni R."/>
            <person name="Kumagai T."/>
            <person name="Lafton A."/>
            <person name="Latge J.-P."/>
            <person name="Li W."/>
            <person name="Lord A."/>
            <person name="Lu C."/>
            <person name="Majoros W.H."/>
            <person name="May G.S."/>
            <person name="Miller B.L."/>
            <person name="Mohamoud Y."/>
            <person name="Molina M."/>
            <person name="Monod M."/>
            <person name="Mouyna I."/>
            <person name="Mulligan S."/>
            <person name="Murphy L.D."/>
            <person name="O'Neil S."/>
            <person name="Paulsen I."/>
            <person name="Penalva M.A."/>
            <person name="Pertea M."/>
            <person name="Price C."/>
            <person name="Pritchard B.L."/>
            <person name="Quail M.A."/>
            <person name="Rabbinowitsch E."/>
            <person name="Rawlins N."/>
            <person name="Rajandream M.A."/>
            <person name="Reichard U."/>
            <person name="Renauld H."/>
            <person name="Robson G.D."/>
            <person name="Rodriguez de Cordoba S."/>
            <person name="Rodriguez-Pena J.M."/>
            <person name="Ronning C.M."/>
            <person name="Rutter S."/>
            <person name="Salzberg S.L."/>
            <person name="Sanchez M."/>
            <person name="Sanchez-Ferrero J.C."/>
            <person name="Saunders D."/>
            <person name="Seeger K."/>
            <person name="Squares R."/>
            <person name="Squares S."/>
            <person name="Takeuchi M."/>
            <person name="Tekaia F."/>
            <person name="Turner G."/>
            <person name="Vazquez de Aldana C.R."/>
            <person name="Weidman J."/>
            <person name="White O."/>
            <person name="Woodward J.R."/>
            <person name="Yu J.-H."/>
            <person name="Fraser C.M."/>
            <person name="Galagan J.E."/>
            <person name="Asai K."/>
            <person name="Machida M."/>
            <person name="Hall N."/>
            <person name="Barrell B.G."/>
            <person name="Denning D.W."/>
        </authorList>
    </citation>
    <scope>NUCLEOTIDE SEQUENCE [LARGE SCALE GENOMIC DNA]</scope>
    <source>
        <strain>ATCC MYA-4609 / CBS 101355 / FGSC A1100 / Af293</strain>
    </source>
</reference>
<proteinExistence type="inferred from homology"/>
<organism>
    <name type="scientific">Aspergillus fumigatus (strain ATCC MYA-4609 / CBS 101355 / FGSC A1100 / Af293)</name>
    <name type="common">Neosartorya fumigata</name>
    <dbReference type="NCBI Taxonomy" id="330879"/>
    <lineage>
        <taxon>Eukaryota</taxon>
        <taxon>Fungi</taxon>
        <taxon>Dikarya</taxon>
        <taxon>Ascomycota</taxon>
        <taxon>Pezizomycotina</taxon>
        <taxon>Eurotiomycetes</taxon>
        <taxon>Eurotiomycetidae</taxon>
        <taxon>Eurotiales</taxon>
        <taxon>Aspergillaceae</taxon>
        <taxon>Aspergillus</taxon>
        <taxon>Aspergillus subgen. Fumigati</taxon>
    </lineage>
</organism>
<sequence>MASNDKGLEEIPEGQIESNYDEITDSFDAMDLKPELLRGVYAYGFERPSAIQQRAILPIIKGNDVIAQAQSGTGKTATFSISALQKLDPNVKGCQALILAPTRELAQQIQKVVVAIGDFMNIECHACIGGTNVREDMKALQEGPQVVVGTPGRVQDMIQRRVLRTDNLKMFILDEADEMLSRGFTEQIYDIFQLLPQSTQVVLLSATMPQDVLEVTTKFMRDPVRILVKKQELTLEGIKQFYIAVEKEEWKLDTLSDLYETVTITQAVIFCNTRRKVDWLTDKLTARDFTVSAMHGDMEQAQRDVIMKEFRSGSSRVLIATDLLARGIDVQQVSLVINYDLPANRENYIHRIGRGGRFGRKGVAINFVTADDVRMMREIEQFYSTQIEEMPMNVAGKFNHVDISLD</sequence>